<organism>
    <name type="scientific">Dictyostelium discoideum</name>
    <name type="common">Social amoeba</name>
    <dbReference type="NCBI Taxonomy" id="44689"/>
    <lineage>
        <taxon>Eukaryota</taxon>
        <taxon>Amoebozoa</taxon>
        <taxon>Evosea</taxon>
        <taxon>Eumycetozoa</taxon>
        <taxon>Dictyostelia</taxon>
        <taxon>Dictyosteliales</taxon>
        <taxon>Dictyosteliaceae</taxon>
        <taxon>Dictyostelium</taxon>
    </lineage>
</organism>
<name>DPOE1_DICDI</name>
<protein>
    <recommendedName>
        <fullName>DNA polymerase epsilon catalytic subunit A</fullName>
        <ecNumber evidence="2">2.7.7.7</ecNumber>
    </recommendedName>
    <alternativeName>
        <fullName>DNA polymerase II subunit A</fullName>
    </alternativeName>
</protein>
<gene>
    <name type="primary">pole</name>
    <name type="synonym">pol2</name>
    <name type="ORF">DDB_G0283189</name>
</gene>
<keyword id="KW-0004">4Fe-4S</keyword>
<keyword id="KW-0235">DNA replication</keyword>
<keyword id="KW-0238">DNA-binding</keyword>
<keyword id="KW-0239">DNA-directed DNA polymerase</keyword>
<keyword id="KW-0408">Iron</keyword>
<keyword id="KW-0411">Iron-sulfur</keyword>
<keyword id="KW-0479">Metal-binding</keyword>
<keyword id="KW-0548">Nucleotidyltransferase</keyword>
<keyword id="KW-0539">Nucleus</keyword>
<keyword id="KW-1185">Reference proteome</keyword>
<keyword id="KW-0808">Transferase</keyword>
<keyword id="KW-0862">Zinc</keyword>
<keyword id="KW-0863">Zinc-finger</keyword>
<sequence>MSQKWNENKKNKDEKDENDKYVGFKNYEKEGWLLNMQPGSSKDGLDIEKASLELFFIQDDATSFRVWIPYNPYFYIYVKEGHQSEVESYLKSTYEKDIAGIDIMDKEDLDLENHLSGLKRKYLKIRFHNVSTLLSVRNDLFPIIKRNKQKSNTSEAYEDESLNKILNSYYNKGNNNNNNHQNYNNNNNQNNNNFNKELNKDDNNNNNSKLNKQATEYILDIREYDVPYYVRAAIDLNIRVGLWYTVIKNGRLTTVNELTTRVDRPDPKVLAYDIETTKLPLKFPDSSIDSIMMISYMLDKQGYLIVNREIVSEDIKDFEYTPKPEYYGPFTVFNEPDEKSVLERFFSEIKREKPHIFVSYNGDMFDWPFVESRAEYHGLSMFHQIGFRNDNGEYRSKINPHMDAFCWVKRDSYLPHGSHGLKAVTREKLRYDPLELDPELMLKSAQEDPETLANYSVSDAVATYYLYMNYVHPFIFSLCTIIPMNPDDVLRKGSGTLCEALLMTQAFKADVIFPNKHKDDINSMYKGHLLESETYVGGHVECLESGVFRSDIPTNFSLDPASIEKHMGNIDQVLKFALKEGGIPLDTVSNYQEVKEDVLKKFTLLKENPKQQSHPLIYHLDVSAMYPNIILTNKLQPTAVVNDEVCATCVYNKPESQCQRTLDWQWRGDYSPSNQSEYRLILQQLESEKFGDGDERKSFLSLSEEKRNELLRKRLKEYSRKVYRKTHQITQEIRSDTICMRENSFYVDTVRLFRDRRYVFKNHHRDWKIKYDQAMQESGGTNSVAVVAAQGMVVLYESLQLAHKCILNSFYGYVMRKGARWYSMQMAGIVTHTGSNIIKEAREVVEQMGRPLEIDTDGIWCILPSHFPENYTLKSASTGKKVTFSYICEMLNEKVAKSFTNHQYQDYNAETNTYTIRDECSILFECDGPYRCMLIPTSKEKDVKLKKRYAVFNREGRICELKGFEIKRRGELKLIKLFQSEVFKEFLGGDSLEGCYQSVGAVANRWLDILDSHAENYEEKDLIELITESSNMSRKLEEYGTQKSSAISTAKKLAEFLGDDMIKDKGLSCQYIISNKPAGSPITERALPVAIFDADFETRCHYLRRWTKSPSGDLDIRELIDWDYYRQRLSGVIQKIITIPAALQNVTNPVPRVIHPDWILKEIRRNEDGRQQTSITSFFEKTEDNDQDNDNDNDNDNDNDNDNSKPQQTDDIENMFSSRFKDLPAFNPKVTKFKRSKQSSSDVSSLLIKKSKSSIETFTNEQEKQIMETKTPSIDKDFQGWLSISKKKWKIQRLLKKRRQRLGGSLFDSDSFRIGSKLTNRESSSSSFFKSQSDIIKKGYWNIISIEPIYGGEPGIYQMWSLIEDQLIPIKVDIGRVFYLNSIDTDPYEDAQKNTNVIPPRGKQRFNVFSVTMSESQFLEQSKELNTLFTNPMIEGVYETKVPLDIKAIIQCGCVATLSRVSPFFTKIVNSNTRFSLEDIASKPDKQFHYLAEHNFNQLFLYHNSRDGKDGYFVLFNMNTQQCSVIFSNPYMAANKIDARVLNSIKEKLPEITFTMDQKSSMSLAKKEIGSLIMEYQRKGLPTIILLQVPNAIGILEQIPILREFPRVPVPYHDNDSMYSPFNWDVHSLKPLPLRLMDAPKLWVYYANMSRYANIPIGNIPTDNASFMCDILYARSLVEQKHLLWMSDSNFPDLGGSEEDDAKFYEELNNVEINNSDCYNQVCFELDIENLATNTILESIHLAEIEGILGNELGDESNVAMFDDIKNTSNNSNTKNGANQNTTNDTTSSFDKLSITNKFRSAINHQISGCEKEFNILRNLVSKWKLDLVSGSNSKRNEISSRYSNYLLLHFYRWISSTNSKLYDPILYRTLHQLMKKVFIQLIFEFKKLGSKIVYANFNKIIICSQKDSIEDARSYCNYILAVIKKKELFSWINFKQTNYYHNLLWLNNSNYSGILYFNPLINKNQQQQQQQQDNADDDDDDDVSENEEEQQQNKNKKLKKIKNGKIITNWNIAEFLPPQIQTSFIIIISDYIYKLHTERDELNRIQKEQQQRYLLKQKISTTSSSSNNDSTAATTTTTKDTINEPTKPDLRKSSTWNEEEDEDISIPPSSSSSTTTTTSKTKKATSKFDLLIDVNRIFTLLDHFQVNQSSLEFPQLPGGYLKLNNPPLEFIKFVCHVLSIDKSISSRVSRLRMKLMTSMKVREFSDEAKFKDPCVSFTLPDVICSSCHSCRDIDLLRNTNTTSISSRLSSQQKSNNNDSDDSDDDNEENEGDDDNIIRVPELSCIQCKGHYSKNTIESQLVEIIQRRSLSYQLQDLRCSKCNDVKSDNLGDICPQCSGQWECTQSNNLFSKDLIIFKSIAEYHNFEWLGETVDSLSKFI</sequence>
<proteinExistence type="inferred from homology"/>
<dbReference type="EC" id="2.7.7.7" evidence="2"/>
<dbReference type="EMBL" id="AAFI02000051">
    <property type="protein sequence ID" value="EAL65833.1"/>
    <property type="molecule type" value="Genomic_DNA"/>
</dbReference>
<dbReference type="RefSeq" id="XP_639211.1">
    <property type="nucleotide sequence ID" value="XM_634119.1"/>
</dbReference>
<dbReference type="SMR" id="Q54RD4"/>
<dbReference type="FunCoup" id="Q54RD4">
    <property type="interactions" value="487"/>
</dbReference>
<dbReference type="STRING" id="44689.Q54RD4"/>
<dbReference type="PaxDb" id="44689-DDB0216320"/>
<dbReference type="EnsemblProtists" id="EAL65833">
    <property type="protein sequence ID" value="EAL65833"/>
    <property type="gene ID" value="DDB_G0283189"/>
</dbReference>
<dbReference type="GeneID" id="8623984"/>
<dbReference type="KEGG" id="ddi:DDB_G0283189"/>
<dbReference type="dictyBase" id="DDB_G0283189"/>
<dbReference type="VEuPathDB" id="AmoebaDB:DDB_G0283189"/>
<dbReference type="eggNOG" id="KOG1798">
    <property type="taxonomic scope" value="Eukaryota"/>
</dbReference>
<dbReference type="HOGENOM" id="CLU_000556_0_1_1"/>
<dbReference type="InParanoid" id="Q54RD4"/>
<dbReference type="OMA" id="MLDQCRY"/>
<dbReference type="PhylomeDB" id="Q54RD4"/>
<dbReference type="Reactome" id="R-DDI-110314">
    <property type="pathway name" value="Recognition of DNA damage by PCNA-containing replication complex"/>
</dbReference>
<dbReference type="Reactome" id="R-DDI-5651801">
    <property type="pathway name" value="PCNA-Dependent Long Patch Base Excision Repair"/>
</dbReference>
<dbReference type="Reactome" id="R-DDI-5656169">
    <property type="pathway name" value="Termination of translesion DNA synthesis"/>
</dbReference>
<dbReference type="Reactome" id="R-DDI-5696397">
    <property type="pathway name" value="Gap-filling DNA repair synthesis and ligation in GG-NER"/>
</dbReference>
<dbReference type="Reactome" id="R-DDI-6782135">
    <property type="pathway name" value="Dual incision in TC-NER"/>
</dbReference>
<dbReference type="Reactome" id="R-DDI-6782210">
    <property type="pathway name" value="Gap-filling DNA repair synthesis and ligation in TC-NER"/>
</dbReference>
<dbReference type="Reactome" id="R-DDI-68952">
    <property type="pathway name" value="DNA replication initiation"/>
</dbReference>
<dbReference type="Reactome" id="R-DDI-68962">
    <property type="pathway name" value="Activation of the pre-replicative complex"/>
</dbReference>
<dbReference type="PRO" id="PR:Q54RD4"/>
<dbReference type="Proteomes" id="UP000002195">
    <property type="component" value="Chromosome 4"/>
</dbReference>
<dbReference type="GO" id="GO:0008622">
    <property type="term" value="C:epsilon DNA polymerase complex"/>
    <property type="evidence" value="ECO:0000250"/>
    <property type="project" value="dictyBase"/>
</dbReference>
<dbReference type="GO" id="GO:0005657">
    <property type="term" value="C:replication fork"/>
    <property type="evidence" value="ECO:0000250"/>
    <property type="project" value="dictyBase"/>
</dbReference>
<dbReference type="GO" id="GO:0051539">
    <property type="term" value="F:4 iron, 4 sulfur cluster binding"/>
    <property type="evidence" value="ECO:0007669"/>
    <property type="project" value="UniProtKB-KW"/>
</dbReference>
<dbReference type="GO" id="GO:0003677">
    <property type="term" value="F:DNA binding"/>
    <property type="evidence" value="ECO:0000318"/>
    <property type="project" value="GO_Central"/>
</dbReference>
<dbReference type="GO" id="GO:0003887">
    <property type="term" value="F:DNA-directed DNA polymerase activity"/>
    <property type="evidence" value="ECO:0000250"/>
    <property type="project" value="dictyBase"/>
</dbReference>
<dbReference type="GO" id="GO:0000166">
    <property type="term" value="F:nucleotide binding"/>
    <property type="evidence" value="ECO:0007669"/>
    <property type="project" value="InterPro"/>
</dbReference>
<dbReference type="GO" id="GO:0008310">
    <property type="term" value="F:single-stranded DNA 3'-5' DNA exonuclease activity"/>
    <property type="evidence" value="ECO:0000318"/>
    <property type="project" value="GO_Central"/>
</dbReference>
<dbReference type="GO" id="GO:0008270">
    <property type="term" value="F:zinc ion binding"/>
    <property type="evidence" value="ECO:0007669"/>
    <property type="project" value="UniProtKB-KW"/>
</dbReference>
<dbReference type="GO" id="GO:0006287">
    <property type="term" value="P:base-excision repair, gap-filling"/>
    <property type="evidence" value="ECO:0000318"/>
    <property type="project" value="GO_Central"/>
</dbReference>
<dbReference type="GO" id="GO:0045004">
    <property type="term" value="P:DNA replication proofreading"/>
    <property type="evidence" value="ECO:0000318"/>
    <property type="project" value="GO_Central"/>
</dbReference>
<dbReference type="GO" id="GO:0006272">
    <property type="term" value="P:leading strand elongation"/>
    <property type="evidence" value="ECO:0000250"/>
    <property type="project" value="dictyBase"/>
</dbReference>
<dbReference type="GO" id="GO:0000278">
    <property type="term" value="P:mitotic cell cycle"/>
    <property type="evidence" value="ECO:0000318"/>
    <property type="project" value="GO_Central"/>
</dbReference>
<dbReference type="GO" id="GO:0006289">
    <property type="term" value="P:nucleotide-excision repair"/>
    <property type="evidence" value="ECO:0000250"/>
    <property type="project" value="dictyBase"/>
</dbReference>
<dbReference type="GO" id="GO:0006297">
    <property type="term" value="P:nucleotide-excision repair, DNA gap filling"/>
    <property type="evidence" value="ECO:0000318"/>
    <property type="project" value="GO_Central"/>
</dbReference>
<dbReference type="CDD" id="cd05779">
    <property type="entry name" value="DNA_polB_epsilon_exo"/>
    <property type="match status" value="1"/>
</dbReference>
<dbReference type="CDD" id="cd05535">
    <property type="entry name" value="POLBc_epsilon"/>
    <property type="match status" value="1"/>
</dbReference>
<dbReference type="FunFam" id="1.10.132.60:FF:000002">
    <property type="entry name" value="DNA polymerase epsilon catalytic subunit"/>
    <property type="match status" value="1"/>
</dbReference>
<dbReference type="FunFam" id="3.30.420.10:FF:000010">
    <property type="entry name" value="DNA polymerase epsilon catalytic subunit"/>
    <property type="match status" value="1"/>
</dbReference>
<dbReference type="Gene3D" id="1.10.132.60">
    <property type="entry name" value="DNA polymerase family B, C-terminal domain"/>
    <property type="match status" value="1"/>
</dbReference>
<dbReference type="Gene3D" id="3.30.342.10">
    <property type="entry name" value="DNA Polymerase, chain B, domain 1"/>
    <property type="match status" value="1"/>
</dbReference>
<dbReference type="Gene3D" id="3.90.1600.10">
    <property type="entry name" value="Palm domain of DNA polymerase"/>
    <property type="match status" value="1"/>
</dbReference>
<dbReference type="Gene3D" id="3.30.420.10">
    <property type="entry name" value="Ribonuclease H-like superfamily/Ribonuclease H"/>
    <property type="match status" value="1"/>
</dbReference>
<dbReference type="InterPro" id="IPR006172">
    <property type="entry name" value="DNA-dir_DNA_pol_B"/>
</dbReference>
<dbReference type="InterPro" id="IPR006133">
    <property type="entry name" value="DNA-dir_DNA_pol_B_exonuc"/>
</dbReference>
<dbReference type="InterPro" id="IPR043502">
    <property type="entry name" value="DNA/RNA_pol_sf"/>
</dbReference>
<dbReference type="InterPro" id="IPR042087">
    <property type="entry name" value="DNA_pol_B_thumb"/>
</dbReference>
<dbReference type="InterPro" id="IPR013697">
    <property type="entry name" value="DNA_pol_e_suA_C"/>
</dbReference>
<dbReference type="InterPro" id="IPR023211">
    <property type="entry name" value="DNA_pol_palm_dom_sf"/>
</dbReference>
<dbReference type="InterPro" id="IPR029703">
    <property type="entry name" value="POL2"/>
</dbReference>
<dbReference type="InterPro" id="IPR055191">
    <property type="entry name" value="POL2_thumb"/>
</dbReference>
<dbReference type="InterPro" id="IPR012337">
    <property type="entry name" value="RNaseH-like_sf"/>
</dbReference>
<dbReference type="InterPro" id="IPR036397">
    <property type="entry name" value="RNaseH_sf"/>
</dbReference>
<dbReference type="InterPro" id="IPR054475">
    <property type="entry name" value="Znf-DPOE"/>
</dbReference>
<dbReference type="PANTHER" id="PTHR10670">
    <property type="entry name" value="DNA POLYMERASE EPSILON CATALYTIC SUBUNIT A"/>
    <property type="match status" value="1"/>
</dbReference>
<dbReference type="PANTHER" id="PTHR10670:SF0">
    <property type="entry name" value="DNA POLYMERASE EPSILON CATALYTIC SUBUNIT A"/>
    <property type="match status" value="1"/>
</dbReference>
<dbReference type="Pfam" id="PF03104">
    <property type="entry name" value="DNA_pol_B_exo1"/>
    <property type="match status" value="1"/>
</dbReference>
<dbReference type="Pfam" id="PF08490">
    <property type="entry name" value="DUF1744"/>
    <property type="match status" value="1"/>
</dbReference>
<dbReference type="Pfam" id="PF22634">
    <property type="entry name" value="POL2_thumb"/>
    <property type="match status" value="1"/>
</dbReference>
<dbReference type="Pfam" id="PF22912">
    <property type="entry name" value="zf-DPOE"/>
    <property type="match status" value="1"/>
</dbReference>
<dbReference type="Pfam" id="PF23250">
    <property type="entry name" value="zf_DPOE_2"/>
    <property type="match status" value="1"/>
</dbReference>
<dbReference type="SMART" id="SM01159">
    <property type="entry name" value="DUF1744"/>
    <property type="match status" value="1"/>
</dbReference>
<dbReference type="SMART" id="SM00486">
    <property type="entry name" value="POLBc"/>
    <property type="match status" value="1"/>
</dbReference>
<dbReference type="SUPFAM" id="SSF56672">
    <property type="entry name" value="DNA/RNA polymerases"/>
    <property type="match status" value="1"/>
</dbReference>
<dbReference type="SUPFAM" id="SSF53098">
    <property type="entry name" value="Ribonuclease H-like"/>
    <property type="match status" value="1"/>
</dbReference>
<evidence type="ECO:0000250" key="1"/>
<evidence type="ECO:0000250" key="2">
    <source>
        <dbReference type="UniProtKB" id="P15436"/>
    </source>
</evidence>
<evidence type="ECO:0000256" key="3">
    <source>
        <dbReference type="SAM" id="MobiDB-lite"/>
    </source>
</evidence>
<evidence type="ECO:0000305" key="4"/>
<accession>Q54RD4</accession>
<comment type="function">
    <text evidence="1">DNA polymerase II participates in chromosomal DNA replication.</text>
</comment>
<comment type="catalytic activity">
    <reaction evidence="2">
        <text>DNA(n) + a 2'-deoxyribonucleoside 5'-triphosphate = DNA(n+1) + diphosphate</text>
        <dbReference type="Rhea" id="RHEA:22508"/>
        <dbReference type="Rhea" id="RHEA-COMP:17339"/>
        <dbReference type="Rhea" id="RHEA-COMP:17340"/>
        <dbReference type="ChEBI" id="CHEBI:33019"/>
        <dbReference type="ChEBI" id="CHEBI:61560"/>
        <dbReference type="ChEBI" id="CHEBI:173112"/>
        <dbReference type="EC" id="2.7.7.7"/>
    </reaction>
</comment>
<comment type="cofactor">
    <cofactor evidence="2">
        <name>[4Fe-4S] cluster</name>
        <dbReference type="ChEBI" id="CHEBI:49883"/>
    </cofactor>
    <text evidence="2">Binds 1 [4Fe-4S] cluster.</text>
</comment>
<comment type="subunit">
    <text evidence="4">Consists of three subunits: pole, pole2 and pole3.</text>
</comment>
<comment type="subcellular location">
    <subcellularLocation>
        <location evidence="1">Nucleus</location>
    </subcellularLocation>
</comment>
<comment type="domain">
    <text evidence="2">The CysA-type zinc finger is required for PCNA-binding.</text>
</comment>
<comment type="domain">
    <text evidence="2">The CysB motif binds 1 4Fe-4S cluster and is required for the formation of polymerase complexes.</text>
</comment>
<comment type="similarity">
    <text evidence="4">Belongs to the DNA polymerase type-B family.</text>
</comment>
<reference key="1">
    <citation type="journal article" date="2005" name="Nature">
        <title>The genome of the social amoeba Dictyostelium discoideum.</title>
        <authorList>
            <person name="Eichinger L."/>
            <person name="Pachebat J.A."/>
            <person name="Gloeckner G."/>
            <person name="Rajandream M.A."/>
            <person name="Sucgang R."/>
            <person name="Berriman M."/>
            <person name="Song J."/>
            <person name="Olsen R."/>
            <person name="Szafranski K."/>
            <person name="Xu Q."/>
            <person name="Tunggal B."/>
            <person name="Kummerfeld S."/>
            <person name="Madera M."/>
            <person name="Konfortov B.A."/>
            <person name="Rivero F."/>
            <person name="Bankier A.T."/>
            <person name="Lehmann R."/>
            <person name="Hamlin N."/>
            <person name="Davies R."/>
            <person name="Gaudet P."/>
            <person name="Fey P."/>
            <person name="Pilcher K."/>
            <person name="Chen G."/>
            <person name="Saunders D."/>
            <person name="Sodergren E.J."/>
            <person name="Davis P."/>
            <person name="Kerhornou A."/>
            <person name="Nie X."/>
            <person name="Hall N."/>
            <person name="Anjard C."/>
            <person name="Hemphill L."/>
            <person name="Bason N."/>
            <person name="Farbrother P."/>
            <person name="Desany B."/>
            <person name="Just E."/>
            <person name="Morio T."/>
            <person name="Rost R."/>
            <person name="Churcher C.M."/>
            <person name="Cooper J."/>
            <person name="Haydock S."/>
            <person name="van Driessche N."/>
            <person name="Cronin A."/>
            <person name="Goodhead I."/>
            <person name="Muzny D.M."/>
            <person name="Mourier T."/>
            <person name="Pain A."/>
            <person name="Lu M."/>
            <person name="Harper D."/>
            <person name="Lindsay R."/>
            <person name="Hauser H."/>
            <person name="James K.D."/>
            <person name="Quiles M."/>
            <person name="Madan Babu M."/>
            <person name="Saito T."/>
            <person name="Buchrieser C."/>
            <person name="Wardroper A."/>
            <person name="Felder M."/>
            <person name="Thangavelu M."/>
            <person name="Johnson D."/>
            <person name="Knights A."/>
            <person name="Loulseged H."/>
            <person name="Mungall K.L."/>
            <person name="Oliver K."/>
            <person name="Price C."/>
            <person name="Quail M.A."/>
            <person name="Urushihara H."/>
            <person name="Hernandez J."/>
            <person name="Rabbinowitsch E."/>
            <person name="Steffen D."/>
            <person name="Sanders M."/>
            <person name="Ma J."/>
            <person name="Kohara Y."/>
            <person name="Sharp S."/>
            <person name="Simmonds M.N."/>
            <person name="Spiegler S."/>
            <person name="Tivey A."/>
            <person name="Sugano S."/>
            <person name="White B."/>
            <person name="Walker D."/>
            <person name="Woodward J.R."/>
            <person name="Winckler T."/>
            <person name="Tanaka Y."/>
            <person name="Shaulsky G."/>
            <person name="Schleicher M."/>
            <person name="Weinstock G.M."/>
            <person name="Rosenthal A."/>
            <person name="Cox E.C."/>
            <person name="Chisholm R.L."/>
            <person name="Gibbs R.A."/>
            <person name="Loomis W.F."/>
            <person name="Platzer M."/>
            <person name="Kay R.R."/>
            <person name="Williams J.G."/>
            <person name="Dear P.H."/>
            <person name="Noegel A.A."/>
            <person name="Barrell B.G."/>
            <person name="Kuspa A."/>
        </authorList>
    </citation>
    <scope>NUCLEOTIDE SEQUENCE [LARGE SCALE GENOMIC DNA]</scope>
    <source>
        <strain>AX4</strain>
    </source>
</reference>
<feature type="chain" id="PRO_0000328349" description="DNA polymerase epsilon catalytic subunit A">
    <location>
        <begin position="1"/>
        <end position="2380"/>
    </location>
</feature>
<feature type="zinc finger region" description="CysA-type" evidence="2">
    <location>
        <begin position="2225"/>
        <end position="2288"/>
    </location>
</feature>
<feature type="region of interest" description="Disordered" evidence="3">
    <location>
        <begin position="169"/>
        <end position="209"/>
    </location>
</feature>
<feature type="region of interest" description="Disordered" evidence="3">
    <location>
        <begin position="1178"/>
        <end position="1210"/>
    </location>
</feature>
<feature type="region of interest" description="Disordered" evidence="3">
    <location>
        <begin position="1766"/>
        <end position="1787"/>
    </location>
</feature>
<feature type="region of interest" description="Disordered" evidence="3">
    <location>
        <begin position="1967"/>
        <end position="1998"/>
    </location>
</feature>
<feature type="region of interest" description="Disordered" evidence="3">
    <location>
        <begin position="2059"/>
        <end position="2120"/>
    </location>
</feature>
<feature type="region of interest" description="Disordered" evidence="3">
    <location>
        <begin position="2245"/>
        <end position="2275"/>
    </location>
</feature>
<feature type="short sequence motif" description="CysB motif" evidence="2">
    <location>
        <begin position="2319"/>
        <end position="2337"/>
    </location>
</feature>
<feature type="compositionally biased region" description="Low complexity" evidence="3">
    <location>
        <begin position="169"/>
        <end position="196"/>
    </location>
</feature>
<feature type="compositionally biased region" description="Acidic residues" evidence="3">
    <location>
        <begin position="1183"/>
        <end position="1201"/>
    </location>
</feature>
<feature type="compositionally biased region" description="Low complexity" evidence="3">
    <location>
        <begin position="1767"/>
        <end position="1776"/>
    </location>
</feature>
<feature type="compositionally biased region" description="Polar residues" evidence="3">
    <location>
        <begin position="1777"/>
        <end position="1787"/>
    </location>
</feature>
<feature type="compositionally biased region" description="Acidic residues" evidence="3">
    <location>
        <begin position="1975"/>
        <end position="1991"/>
    </location>
</feature>
<feature type="compositionally biased region" description="Low complexity" evidence="3">
    <location>
        <begin position="2059"/>
        <end position="2081"/>
    </location>
</feature>
<feature type="compositionally biased region" description="Low complexity" evidence="3">
    <location>
        <begin position="2110"/>
        <end position="2120"/>
    </location>
</feature>
<feature type="compositionally biased region" description="Low complexity" evidence="3">
    <location>
        <begin position="2245"/>
        <end position="2258"/>
    </location>
</feature>
<feature type="compositionally biased region" description="Acidic residues" evidence="3">
    <location>
        <begin position="2259"/>
        <end position="2275"/>
    </location>
</feature>
<feature type="binding site" evidence="2">
    <location>
        <position position="2225"/>
    </location>
    <ligand>
        <name>Zn(2+)</name>
        <dbReference type="ChEBI" id="CHEBI:29105"/>
    </ligand>
</feature>
<feature type="binding site" evidence="2">
    <location>
        <position position="2228"/>
    </location>
    <ligand>
        <name>Zn(2+)</name>
        <dbReference type="ChEBI" id="CHEBI:29105"/>
    </ligand>
</feature>
<feature type="binding site" evidence="2">
    <location>
        <position position="2285"/>
    </location>
    <ligand>
        <name>Zn(2+)</name>
        <dbReference type="ChEBI" id="CHEBI:29105"/>
    </ligand>
</feature>
<feature type="binding site" evidence="2">
    <location>
        <position position="2288"/>
    </location>
    <ligand>
        <name>Zn(2+)</name>
        <dbReference type="ChEBI" id="CHEBI:29105"/>
    </ligand>
</feature>
<feature type="binding site" evidence="2">
    <location>
        <position position="2319"/>
    </location>
    <ligand>
        <name>[4Fe-4S] cluster</name>
        <dbReference type="ChEBI" id="CHEBI:49883"/>
    </ligand>
</feature>
<feature type="binding site" evidence="2">
    <location>
        <position position="2322"/>
    </location>
    <ligand>
        <name>[4Fe-4S] cluster</name>
        <dbReference type="ChEBI" id="CHEBI:49883"/>
    </ligand>
</feature>
<feature type="binding site" evidence="2">
    <location>
        <position position="2334"/>
    </location>
    <ligand>
        <name>[4Fe-4S] cluster</name>
        <dbReference type="ChEBI" id="CHEBI:49883"/>
    </ligand>
</feature>
<feature type="binding site" evidence="2">
    <location>
        <position position="2337"/>
    </location>
    <ligand>
        <name>[4Fe-4S] cluster</name>
        <dbReference type="ChEBI" id="CHEBI:49883"/>
    </ligand>
</feature>